<keyword id="KW-0406">Ion transport</keyword>
<keyword id="KW-0472">Membrane</keyword>
<keyword id="KW-1267">Proteomics identification</keyword>
<keyword id="KW-1185">Reference proteome</keyword>
<keyword id="KW-0915">Sodium</keyword>
<keyword id="KW-0739">Sodium transport</keyword>
<keyword id="KW-0769">Symport</keyword>
<keyword id="KW-0812">Transmembrane</keyword>
<keyword id="KW-1133">Transmembrane helix</keyword>
<keyword id="KW-0813">Transport</keyword>
<gene>
    <name type="primary">SLC13A4</name>
    <name type="synonym">SUT1</name>
</gene>
<evidence type="ECO:0000255" key="1"/>
<evidence type="ECO:0000256" key="2">
    <source>
        <dbReference type="SAM" id="MobiDB-lite"/>
    </source>
</evidence>
<evidence type="ECO:0000269" key="3">
    <source>
    </source>
</evidence>
<evidence type="ECO:0000269" key="4">
    <source>
    </source>
</evidence>
<evidence type="ECO:0000305" key="5"/>
<protein>
    <recommendedName>
        <fullName>Solute carrier family 13 member 4</fullName>
    </recommendedName>
    <alternativeName>
        <fullName>Na(+)/sulfate cotransporter SUT-1</fullName>
    </alternativeName>
    <alternativeName>
        <fullName>NaS2</fullName>
    </alternativeName>
</protein>
<dbReference type="EMBL" id="AF169301">
    <property type="protein sequence ID" value="AAF05907.1"/>
    <property type="molecule type" value="mRNA"/>
</dbReference>
<dbReference type="EMBL" id="AC091736">
    <property type="status" value="NOT_ANNOTATED_CDS"/>
    <property type="molecule type" value="Genomic_DNA"/>
</dbReference>
<dbReference type="EMBL" id="CH236950">
    <property type="protein sequence ID" value="EAL24058.1"/>
    <property type="molecule type" value="Genomic_DNA"/>
</dbReference>
<dbReference type="EMBL" id="CH471070">
    <property type="protein sequence ID" value="EAW83858.1"/>
    <property type="molecule type" value="Genomic_DNA"/>
</dbReference>
<dbReference type="EMBL" id="BC030689">
    <property type="protein sequence ID" value="AAH30689.1"/>
    <property type="molecule type" value="mRNA"/>
</dbReference>
<dbReference type="CCDS" id="CCDS5840.1"/>
<dbReference type="RefSeq" id="NP_001305121.1">
    <property type="nucleotide sequence ID" value="NM_001318192.1"/>
</dbReference>
<dbReference type="RefSeq" id="NP_036582.2">
    <property type="nucleotide sequence ID" value="NM_012450.3"/>
</dbReference>
<dbReference type="SMR" id="Q9UKG4"/>
<dbReference type="BioGRID" id="117650">
    <property type="interactions" value="29"/>
</dbReference>
<dbReference type="FunCoup" id="Q9UKG4">
    <property type="interactions" value="359"/>
</dbReference>
<dbReference type="IntAct" id="Q9UKG4">
    <property type="interactions" value="25"/>
</dbReference>
<dbReference type="STRING" id="9606.ENSP00000297282"/>
<dbReference type="DrugBank" id="DB09499">
    <property type="generic name" value="Thiosulfuric acid"/>
</dbReference>
<dbReference type="TCDB" id="2.A.47.1.14">
    <property type="family name" value="the divalent anion:na(+) symporter (dass) family"/>
</dbReference>
<dbReference type="iPTMnet" id="Q9UKG4"/>
<dbReference type="PhosphoSitePlus" id="Q9UKG4"/>
<dbReference type="BioMuta" id="SLC13A4"/>
<dbReference type="DMDM" id="221222500"/>
<dbReference type="MassIVE" id="Q9UKG4"/>
<dbReference type="PaxDb" id="9606-ENSP00000297282"/>
<dbReference type="PeptideAtlas" id="Q9UKG4"/>
<dbReference type="ProteomicsDB" id="84786"/>
<dbReference type="Antibodypedia" id="46129">
    <property type="antibodies" value="82 antibodies from 17 providers"/>
</dbReference>
<dbReference type="DNASU" id="26266"/>
<dbReference type="Ensembl" id="ENST00000354042.8">
    <property type="protein sequence ID" value="ENSP00000297282.5"/>
    <property type="gene ID" value="ENSG00000164707.17"/>
</dbReference>
<dbReference type="GeneID" id="26266"/>
<dbReference type="KEGG" id="hsa:26266"/>
<dbReference type="UCSC" id="uc003vta.4">
    <property type="organism name" value="human"/>
</dbReference>
<dbReference type="AGR" id="HGNC:15827"/>
<dbReference type="CTD" id="26266"/>
<dbReference type="DisGeNET" id="26266"/>
<dbReference type="GeneCards" id="SLC13A4"/>
<dbReference type="HGNC" id="HGNC:15827">
    <property type="gene designation" value="SLC13A4"/>
</dbReference>
<dbReference type="HPA" id="ENSG00000164707">
    <property type="expression patterns" value="Tissue enriched (choroid)"/>
</dbReference>
<dbReference type="MIM" id="604309">
    <property type="type" value="gene"/>
</dbReference>
<dbReference type="neXtProt" id="NX_Q9UKG4"/>
<dbReference type="OpenTargets" id="ENSG00000164707"/>
<dbReference type="PharmGKB" id="PA38045"/>
<dbReference type="VEuPathDB" id="HostDB:ENSG00000164707"/>
<dbReference type="eggNOG" id="KOG1281">
    <property type="taxonomic scope" value="Eukaryota"/>
</dbReference>
<dbReference type="GeneTree" id="ENSGT01030000234550"/>
<dbReference type="HOGENOM" id="CLU_005170_9_1_1"/>
<dbReference type="InParanoid" id="Q9UKG4"/>
<dbReference type="OMA" id="TFVRQTN"/>
<dbReference type="OrthoDB" id="6493944at2759"/>
<dbReference type="PAN-GO" id="Q9UKG4">
    <property type="GO annotations" value="2 GO annotations based on evolutionary models"/>
</dbReference>
<dbReference type="PhylomeDB" id="Q9UKG4"/>
<dbReference type="TreeFam" id="TF312913"/>
<dbReference type="PathwayCommons" id="Q9UKG4"/>
<dbReference type="Reactome" id="R-HSA-433137">
    <property type="pathway name" value="Sodium-coupled sulphate, di- and tri-carboxylate transporters"/>
</dbReference>
<dbReference type="SignaLink" id="Q9UKG4"/>
<dbReference type="BioGRID-ORCS" id="26266">
    <property type="hits" value="16 hits in 1141 CRISPR screens"/>
</dbReference>
<dbReference type="ChiTaRS" id="SLC13A4">
    <property type="organism name" value="human"/>
</dbReference>
<dbReference type="GenomeRNAi" id="26266"/>
<dbReference type="Pharos" id="Q9UKG4">
    <property type="development level" value="Tbio"/>
</dbReference>
<dbReference type="PRO" id="PR:Q9UKG4"/>
<dbReference type="Proteomes" id="UP000005640">
    <property type="component" value="Chromosome 7"/>
</dbReference>
<dbReference type="RNAct" id="Q9UKG4">
    <property type="molecule type" value="protein"/>
</dbReference>
<dbReference type="Bgee" id="ENSG00000164707">
    <property type="expression patterns" value="Expressed in choroid plexus epithelium and 121 other cell types or tissues"/>
</dbReference>
<dbReference type="ExpressionAtlas" id="Q9UKG4">
    <property type="expression patterns" value="baseline and differential"/>
</dbReference>
<dbReference type="GO" id="GO:0005886">
    <property type="term" value="C:plasma membrane"/>
    <property type="evidence" value="ECO:0000318"/>
    <property type="project" value="GO_Central"/>
</dbReference>
<dbReference type="GO" id="GO:0015382">
    <property type="term" value="F:sodium:sulfate symporter activity"/>
    <property type="evidence" value="ECO:0000314"/>
    <property type="project" value="UniProtKB"/>
</dbReference>
<dbReference type="GO" id="GO:0022857">
    <property type="term" value="F:transmembrane transporter activity"/>
    <property type="evidence" value="ECO:0000318"/>
    <property type="project" value="GO_Central"/>
</dbReference>
<dbReference type="GO" id="GO:1902358">
    <property type="term" value="P:sulfate transmembrane transport"/>
    <property type="evidence" value="ECO:0000304"/>
    <property type="project" value="ProtInc"/>
</dbReference>
<dbReference type="GO" id="GO:0055085">
    <property type="term" value="P:transmembrane transport"/>
    <property type="evidence" value="ECO:0000318"/>
    <property type="project" value="GO_Central"/>
</dbReference>
<dbReference type="CDD" id="cd01115">
    <property type="entry name" value="SLC13_permease"/>
    <property type="match status" value="1"/>
</dbReference>
<dbReference type="InterPro" id="IPR001898">
    <property type="entry name" value="SLC13A/DASS"/>
</dbReference>
<dbReference type="PANTHER" id="PTHR10283">
    <property type="entry name" value="SOLUTE CARRIER FAMILY 13 MEMBER"/>
    <property type="match status" value="1"/>
</dbReference>
<dbReference type="PANTHER" id="PTHR10283:SF63">
    <property type="entry name" value="SOLUTE CARRIER FAMILY 13 MEMBER 4"/>
    <property type="match status" value="1"/>
</dbReference>
<dbReference type="Pfam" id="PF00939">
    <property type="entry name" value="Na_sulph_symp"/>
    <property type="match status" value="1"/>
</dbReference>
<accession>Q9UKG4</accession>
<accession>A4D1Q4</accession>
<accession>Q8N631</accession>
<proteinExistence type="evidence at protein level"/>
<reference key="1">
    <citation type="journal article" date="1999" name="Proc. Natl. Acad. Sci. U.S.A.">
        <title>Molecular cloning and functional analysis of SUT-1, a sulfate transporter from human high endothelial venules.</title>
        <authorList>
            <person name="Girard J.-P."/>
            <person name="Baekkevold E.S."/>
            <person name="Feliu J."/>
            <person name="Brandtzaeg P."/>
            <person name="Amalric F."/>
        </authorList>
    </citation>
    <scope>NUCLEOTIDE SEQUENCE [MRNA]</scope>
    <scope>FUNCTION</scope>
    <scope>TISSUE SPECIFICITY</scope>
    <scope>TRANSPORTER ACTIVITY</scope>
    <scope>ACTIVITY REGULATION</scope>
    <source>
        <tissue>Endothelial cell</tissue>
    </source>
</reference>
<reference key="2">
    <citation type="journal article" date="2003" name="Nature">
        <title>The DNA sequence of human chromosome 7.</title>
        <authorList>
            <person name="Hillier L.W."/>
            <person name="Fulton R.S."/>
            <person name="Fulton L.A."/>
            <person name="Graves T.A."/>
            <person name="Pepin K.H."/>
            <person name="Wagner-McPherson C."/>
            <person name="Layman D."/>
            <person name="Maas J."/>
            <person name="Jaeger S."/>
            <person name="Walker R."/>
            <person name="Wylie K."/>
            <person name="Sekhon M."/>
            <person name="Becker M.C."/>
            <person name="O'Laughlin M.D."/>
            <person name="Schaller M.E."/>
            <person name="Fewell G.A."/>
            <person name="Delehaunty K.D."/>
            <person name="Miner T.L."/>
            <person name="Nash W.E."/>
            <person name="Cordes M."/>
            <person name="Du H."/>
            <person name="Sun H."/>
            <person name="Edwards J."/>
            <person name="Bradshaw-Cordum H."/>
            <person name="Ali J."/>
            <person name="Andrews S."/>
            <person name="Isak A."/>
            <person name="Vanbrunt A."/>
            <person name="Nguyen C."/>
            <person name="Du F."/>
            <person name="Lamar B."/>
            <person name="Courtney L."/>
            <person name="Kalicki J."/>
            <person name="Ozersky P."/>
            <person name="Bielicki L."/>
            <person name="Scott K."/>
            <person name="Holmes A."/>
            <person name="Harkins R."/>
            <person name="Harris A."/>
            <person name="Strong C.M."/>
            <person name="Hou S."/>
            <person name="Tomlinson C."/>
            <person name="Dauphin-Kohlberg S."/>
            <person name="Kozlowicz-Reilly A."/>
            <person name="Leonard S."/>
            <person name="Rohlfing T."/>
            <person name="Rock S.M."/>
            <person name="Tin-Wollam A.-M."/>
            <person name="Abbott A."/>
            <person name="Minx P."/>
            <person name="Maupin R."/>
            <person name="Strowmatt C."/>
            <person name="Latreille P."/>
            <person name="Miller N."/>
            <person name="Johnson D."/>
            <person name="Murray J."/>
            <person name="Woessner J.P."/>
            <person name="Wendl M.C."/>
            <person name="Yang S.-P."/>
            <person name="Schultz B.R."/>
            <person name="Wallis J.W."/>
            <person name="Spieth J."/>
            <person name="Bieri T.A."/>
            <person name="Nelson J.O."/>
            <person name="Berkowicz N."/>
            <person name="Wohldmann P.E."/>
            <person name="Cook L.L."/>
            <person name="Hickenbotham M.T."/>
            <person name="Eldred J."/>
            <person name="Williams D."/>
            <person name="Bedell J.A."/>
            <person name="Mardis E.R."/>
            <person name="Clifton S.W."/>
            <person name="Chissoe S.L."/>
            <person name="Marra M.A."/>
            <person name="Raymond C."/>
            <person name="Haugen E."/>
            <person name="Gillett W."/>
            <person name="Zhou Y."/>
            <person name="James R."/>
            <person name="Phelps K."/>
            <person name="Iadanoto S."/>
            <person name="Bubb K."/>
            <person name="Simms E."/>
            <person name="Levy R."/>
            <person name="Clendenning J."/>
            <person name="Kaul R."/>
            <person name="Kent W.J."/>
            <person name="Furey T.S."/>
            <person name="Baertsch R.A."/>
            <person name="Brent M.R."/>
            <person name="Keibler E."/>
            <person name="Flicek P."/>
            <person name="Bork P."/>
            <person name="Suyama M."/>
            <person name="Bailey J.A."/>
            <person name="Portnoy M.E."/>
            <person name="Torrents D."/>
            <person name="Chinwalla A.T."/>
            <person name="Gish W.R."/>
            <person name="Eddy S.R."/>
            <person name="McPherson J.D."/>
            <person name="Olson M.V."/>
            <person name="Eichler E.E."/>
            <person name="Green E.D."/>
            <person name="Waterston R.H."/>
            <person name="Wilson R.K."/>
        </authorList>
    </citation>
    <scope>NUCLEOTIDE SEQUENCE [LARGE SCALE GENOMIC DNA]</scope>
</reference>
<reference key="3">
    <citation type="journal article" date="2003" name="Science">
        <title>Human chromosome 7: DNA sequence and biology.</title>
        <authorList>
            <person name="Scherer S.W."/>
            <person name="Cheung J."/>
            <person name="MacDonald J.R."/>
            <person name="Osborne L.R."/>
            <person name="Nakabayashi K."/>
            <person name="Herbrick J.-A."/>
            <person name="Carson A.R."/>
            <person name="Parker-Katiraee L."/>
            <person name="Skaug J."/>
            <person name="Khaja R."/>
            <person name="Zhang J."/>
            <person name="Hudek A.K."/>
            <person name="Li M."/>
            <person name="Haddad M."/>
            <person name="Duggan G.E."/>
            <person name="Fernandez B.A."/>
            <person name="Kanematsu E."/>
            <person name="Gentles S."/>
            <person name="Christopoulos C.C."/>
            <person name="Choufani S."/>
            <person name="Kwasnicka D."/>
            <person name="Zheng X.H."/>
            <person name="Lai Z."/>
            <person name="Nusskern D.R."/>
            <person name="Zhang Q."/>
            <person name="Gu Z."/>
            <person name="Lu F."/>
            <person name="Zeesman S."/>
            <person name="Nowaczyk M.J."/>
            <person name="Teshima I."/>
            <person name="Chitayat D."/>
            <person name="Shuman C."/>
            <person name="Weksberg R."/>
            <person name="Zackai E.H."/>
            <person name="Grebe T.A."/>
            <person name="Cox S.R."/>
            <person name="Kirkpatrick S.J."/>
            <person name="Rahman N."/>
            <person name="Friedman J.M."/>
            <person name="Heng H.H.Q."/>
            <person name="Pelicci P.G."/>
            <person name="Lo-Coco F."/>
            <person name="Belloni E."/>
            <person name="Shaffer L.G."/>
            <person name="Pober B."/>
            <person name="Morton C.C."/>
            <person name="Gusella J.F."/>
            <person name="Bruns G.A.P."/>
            <person name="Korf B.R."/>
            <person name="Quade B.J."/>
            <person name="Ligon A.H."/>
            <person name="Ferguson H."/>
            <person name="Higgins A.W."/>
            <person name="Leach N.T."/>
            <person name="Herrick S.R."/>
            <person name="Lemyre E."/>
            <person name="Farra C.G."/>
            <person name="Kim H.-G."/>
            <person name="Summers A.M."/>
            <person name="Gripp K.W."/>
            <person name="Roberts W."/>
            <person name="Szatmari P."/>
            <person name="Winsor E.J.T."/>
            <person name="Grzeschik K.-H."/>
            <person name="Teebi A."/>
            <person name="Minassian B.A."/>
            <person name="Kere J."/>
            <person name="Armengol L."/>
            <person name="Pujana M.A."/>
            <person name="Estivill X."/>
            <person name="Wilson M.D."/>
            <person name="Koop B.F."/>
            <person name="Tosi S."/>
            <person name="Moore G.E."/>
            <person name="Boright A.P."/>
            <person name="Zlotorynski E."/>
            <person name="Kerem B."/>
            <person name="Kroisel P.M."/>
            <person name="Petek E."/>
            <person name="Oscier D.G."/>
            <person name="Mould S.J."/>
            <person name="Doehner H."/>
            <person name="Doehner K."/>
            <person name="Rommens J.M."/>
            <person name="Vincent J.B."/>
            <person name="Venter J.C."/>
            <person name="Li P.W."/>
            <person name="Mural R.J."/>
            <person name="Adams M.D."/>
            <person name="Tsui L.-C."/>
        </authorList>
    </citation>
    <scope>NUCLEOTIDE SEQUENCE [LARGE SCALE GENOMIC DNA]</scope>
</reference>
<reference key="4">
    <citation type="submission" date="2005-07" db="EMBL/GenBank/DDBJ databases">
        <authorList>
            <person name="Mural R.J."/>
            <person name="Istrail S."/>
            <person name="Sutton G.G."/>
            <person name="Florea L."/>
            <person name="Halpern A.L."/>
            <person name="Mobarry C.M."/>
            <person name="Lippert R."/>
            <person name="Walenz B."/>
            <person name="Shatkay H."/>
            <person name="Dew I."/>
            <person name="Miller J.R."/>
            <person name="Flanigan M.J."/>
            <person name="Edwards N.J."/>
            <person name="Bolanos R."/>
            <person name="Fasulo D."/>
            <person name="Halldorsson B.V."/>
            <person name="Hannenhalli S."/>
            <person name="Turner R."/>
            <person name="Yooseph S."/>
            <person name="Lu F."/>
            <person name="Nusskern D.R."/>
            <person name="Shue B.C."/>
            <person name="Zheng X.H."/>
            <person name="Zhong F."/>
            <person name="Delcher A.L."/>
            <person name="Huson D.H."/>
            <person name="Kravitz S.A."/>
            <person name="Mouchard L."/>
            <person name="Reinert K."/>
            <person name="Remington K.A."/>
            <person name="Clark A.G."/>
            <person name="Waterman M.S."/>
            <person name="Eichler E.E."/>
            <person name="Adams M.D."/>
            <person name="Hunkapiller M.W."/>
            <person name="Myers E.W."/>
            <person name="Venter J.C."/>
        </authorList>
    </citation>
    <scope>NUCLEOTIDE SEQUENCE [LARGE SCALE GENOMIC DNA]</scope>
</reference>
<reference key="5">
    <citation type="journal article" date="2004" name="Genome Res.">
        <title>The status, quality, and expansion of the NIH full-length cDNA project: the Mammalian Gene Collection (MGC).</title>
        <authorList>
            <consortium name="The MGC Project Team"/>
        </authorList>
    </citation>
    <scope>NUCLEOTIDE SEQUENCE [LARGE SCALE MRNA]</scope>
    <source>
        <tissue>Brain</tissue>
    </source>
</reference>
<reference key="6">
    <citation type="journal article" date="2005" name="Biochem. Biophys. Res. Commun.">
        <title>Functional characterization and genomic organization of the human Na(+)-sulfate cotransporter hNaS2 gene (SLC13A4).</title>
        <authorList>
            <person name="Markovich D."/>
            <person name="Regeer R.R."/>
            <person name="Kunzelmann K."/>
            <person name="Dawson P.A."/>
        </authorList>
    </citation>
    <scope>FUNCTION</scope>
    <scope>TISSUE SPECIFICITY</scope>
    <scope>TRANSPORTER ACTIVITY</scope>
    <scope>BIOPHYSICOCHEMICAL PROPERTIES</scope>
</reference>
<organism>
    <name type="scientific">Homo sapiens</name>
    <name type="common">Human</name>
    <dbReference type="NCBI Taxonomy" id="9606"/>
    <lineage>
        <taxon>Eukaryota</taxon>
        <taxon>Metazoa</taxon>
        <taxon>Chordata</taxon>
        <taxon>Craniata</taxon>
        <taxon>Vertebrata</taxon>
        <taxon>Euteleostomi</taxon>
        <taxon>Mammalia</taxon>
        <taxon>Eutheria</taxon>
        <taxon>Euarchontoglires</taxon>
        <taxon>Primates</taxon>
        <taxon>Haplorrhini</taxon>
        <taxon>Catarrhini</taxon>
        <taxon>Hominidae</taxon>
        <taxon>Homo</taxon>
    </lineage>
</organism>
<comment type="function">
    <text evidence="3 4">Sodium:sulfate symporter that mediates sulfate reabsorption in the high endothelial venules (HEV).</text>
</comment>
<comment type="catalytic activity">
    <reaction evidence="3 4">
        <text>sulfate(out) + 3 Na(+)(out) = sulfate(in) + 3 Na(+)(in)</text>
        <dbReference type="Rhea" id="RHEA:71951"/>
        <dbReference type="ChEBI" id="CHEBI:16189"/>
        <dbReference type="ChEBI" id="CHEBI:29101"/>
    </reaction>
</comment>
<comment type="activity regulation">
    <text evidence="3">Transport is inhibited by thiosulfate, phosphate, molybdate, selenate and tungstate. Not inhibited by oxalate, citrate, succinate, phenol red or 4,4'-diisothiocyanostilbene-2,2'-disulfonic acid (DIDS).</text>
</comment>
<comment type="biophysicochemical properties">
    <kinetics>
        <KM evidence="4">0.38 mM for sulfate</KM>
        <KM evidence="4">22.77 mM for sodium</KM>
    </kinetics>
</comment>
<comment type="interaction">
    <interactant intactId="EBI-12808018">
        <id>Q9UKG4</id>
    </interactant>
    <interactant intactId="EBI-13379418">
        <id>O00590</id>
        <label>ACKR2</label>
    </interactant>
    <organismsDiffer>false</organismsDiffer>
    <experiments>3</experiments>
</comment>
<comment type="interaction">
    <interactant intactId="EBI-12808018">
        <id>Q9UKG4</id>
    </interactant>
    <interactant intactId="EBI-3953638">
        <id>P27352</id>
        <label>CBLIF</label>
    </interactant>
    <organismsDiffer>false</organismsDiffer>
    <experiments>3</experiments>
</comment>
<comment type="interaction">
    <interactant intactId="EBI-12808018">
        <id>Q9UKG4</id>
    </interactant>
    <interactant intactId="EBI-7797864">
        <id>P11912</id>
        <label>CD79A</label>
    </interactant>
    <organismsDiffer>false</organismsDiffer>
    <experiments>6</experiments>
</comment>
<comment type="interaction">
    <interactant intactId="EBI-12808018">
        <id>Q9UKG4</id>
    </interactant>
    <interactant intactId="EBI-13295305">
        <id>Q92903</id>
        <label>CDS1</label>
    </interactant>
    <organismsDiffer>false</organismsDiffer>
    <experiments>3</experiments>
</comment>
<comment type="interaction">
    <interactant intactId="EBI-12808018">
        <id>Q9UKG4</id>
    </interactant>
    <interactant intactId="EBI-2622997">
        <id>Q9HA82</id>
        <label>CERS4</label>
    </interactant>
    <organismsDiffer>false</organismsDiffer>
    <experiments>3</experiments>
</comment>
<comment type="interaction">
    <interactant intactId="EBI-12808018">
        <id>Q9UKG4</id>
    </interactant>
    <interactant intactId="EBI-13346443">
        <id>Q8NET1</id>
        <label>DEFB108B</label>
    </interactant>
    <organismsDiffer>false</organismsDiffer>
    <experiments>3</experiments>
</comment>
<comment type="interaction">
    <interactant intactId="EBI-12808018">
        <id>Q9UKG4</id>
    </interactant>
    <interactant intactId="EBI-12831318">
        <id>Q96Q80</id>
        <label>DERL3</label>
    </interactant>
    <organismsDiffer>false</organismsDiffer>
    <experiments>3</experiments>
</comment>
<comment type="interaction">
    <interactant intactId="EBI-12808018">
        <id>Q9UKG4</id>
    </interactant>
    <interactant intactId="EBI-1753674">
        <id>P52803</id>
        <label>EFNA5</label>
    </interactant>
    <organismsDiffer>false</organismsDiffer>
    <experiments>3</experiments>
</comment>
<comment type="interaction">
    <interactant intactId="EBI-12808018">
        <id>Q9UKG4</id>
    </interactant>
    <interactant intactId="EBI-13052900">
        <id>Q5NDL2-3</id>
        <label>EOGT</label>
    </interactant>
    <organismsDiffer>false</organismsDiffer>
    <experiments>3</experiments>
</comment>
<comment type="interaction">
    <interactant intactId="EBI-12808018">
        <id>Q9UKG4</id>
    </interactant>
    <interactant intactId="EBI-10976398">
        <id>Q7Z2K6</id>
        <label>ERMP1</label>
    </interactant>
    <organismsDiffer>false</organismsDiffer>
    <experiments>3</experiments>
</comment>
<comment type="interaction">
    <interactant intactId="EBI-12808018">
        <id>Q9UKG4</id>
    </interactant>
    <interactant intactId="EBI-750433">
        <id>P36382</id>
        <label>GJA5</label>
    </interactant>
    <organismsDiffer>false</organismsDiffer>
    <experiments>3</experiments>
</comment>
<comment type="interaction">
    <interactant intactId="EBI-12808018">
        <id>Q9UKG4</id>
    </interactant>
    <interactant intactId="EBI-13345167">
        <id>Q8TDT2</id>
        <label>GPR152</label>
    </interactant>
    <organismsDiffer>false</organismsDiffer>
    <experiments>3</experiments>
</comment>
<comment type="interaction">
    <interactant intactId="EBI-12808018">
        <id>Q9UKG4</id>
    </interactant>
    <interactant intactId="EBI-12808020">
        <id>Q9BZJ8</id>
        <label>GPR61</label>
    </interactant>
    <organismsDiffer>false</organismsDiffer>
    <experiments>3</experiments>
</comment>
<comment type="interaction">
    <interactant intactId="EBI-12808018">
        <id>Q9UKG4</id>
    </interactant>
    <interactant intactId="EBI-1748945">
        <id>P46695</id>
        <label>IER3</label>
    </interactant>
    <organismsDiffer>false</organismsDiffer>
    <experiments>3</experiments>
</comment>
<comment type="interaction">
    <interactant intactId="EBI-12808018">
        <id>Q9UKG4</id>
    </interactant>
    <interactant intactId="EBI-720480">
        <id>P24593</id>
        <label>IGFBP5</label>
    </interactant>
    <organismsDiffer>false</organismsDiffer>
    <experiments>3</experiments>
</comment>
<comment type="interaction">
    <interactant intactId="EBI-12808018">
        <id>Q9UKG4</id>
    </interactant>
    <interactant intactId="EBI-12070086">
        <id>Q5J8X5</id>
        <label>MS4A13</label>
    </interactant>
    <organismsDiffer>false</organismsDiffer>
    <experiments>3</experiments>
</comment>
<comment type="interaction">
    <interactant intactId="EBI-12808018">
        <id>Q9UKG4</id>
    </interactant>
    <interactant intactId="EBI-2624456">
        <id>P41143</id>
        <label>OPRD1</label>
    </interactant>
    <organismsDiffer>false</organismsDiffer>
    <experiments>3</experiments>
</comment>
<comment type="interaction">
    <interactant intactId="EBI-12808018">
        <id>Q9UKG4</id>
    </interactant>
    <interactant intactId="EBI-12853910">
        <id>Q7RTS5</id>
        <label>OTOP3</label>
    </interactant>
    <organismsDiffer>false</organismsDiffer>
    <experiments>3</experiments>
</comment>
<comment type="interaction">
    <interactant intactId="EBI-12808018">
        <id>Q9UKG4</id>
    </interactant>
    <interactant intactId="EBI-12363689">
        <id>Q96G79</id>
        <label>SLC35A4</label>
    </interactant>
    <organismsDiffer>false</organismsDiffer>
    <experiments>3</experiments>
</comment>
<comment type="interaction">
    <interactant intactId="EBI-12808018">
        <id>Q9UKG4</id>
    </interactant>
    <interactant intactId="EBI-12867720">
        <id>Q6ICL7</id>
        <label>SLC35E4</label>
    </interactant>
    <organismsDiffer>false</organismsDiffer>
    <experiments>3</experiments>
</comment>
<comment type="interaction">
    <interactant intactId="EBI-12808018">
        <id>Q9UKG4</id>
    </interactant>
    <interactant intactId="EBI-9978441">
        <id>Q9H2H9</id>
        <label>SLC38A1</label>
    </interactant>
    <organismsDiffer>false</organismsDiffer>
    <experiments>3</experiments>
</comment>
<comment type="interaction">
    <interactant intactId="EBI-12808018">
        <id>Q9UKG4</id>
    </interactant>
    <interactant intactId="EBI-12266234">
        <id>Q8IVJ1</id>
        <label>SLC41A1</label>
    </interactant>
    <organismsDiffer>false</organismsDiffer>
    <experiments>3</experiments>
</comment>
<comment type="interaction">
    <interactant intactId="EBI-12808018">
        <id>Q9UKG4</id>
    </interactant>
    <interactant intactId="EBI-348587">
        <id>Q9BVK8</id>
        <label>TMEM147</label>
    </interactant>
    <organismsDiffer>false</organismsDiffer>
    <experiments>3</experiments>
</comment>
<comment type="interaction">
    <interactant intactId="EBI-12808018">
        <id>Q9UKG4</id>
    </interactant>
    <interactant intactId="EBI-2852148">
        <id>Q9H2L4</id>
        <label>TMEM60</label>
    </interactant>
    <organismsDiffer>false</organismsDiffer>
    <experiments>3</experiments>
</comment>
<comment type="interaction">
    <interactant intactId="EBI-12808018">
        <id>Q9UKG4</id>
    </interactant>
    <interactant intactId="EBI-11988865">
        <id>A5PKU2</id>
        <label>TUSC5</label>
    </interactant>
    <organismsDiffer>false</organismsDiffer>
    <experiments>3</experiments>
</comment>
<comment type="subcellular location">
    <subcellularLocation>
        <location>Membrane</location>
        <topology evidence="1">Multi-pass membrane protein</topology>
    </subcellularLocation>
</comment>
<comment type="tissue specificity">
    <text evidence="3 4">Highly expressed in placenta and testis with intermediate levels in brain and lower levels in heart, thymus and liver.</text>
</comment>
<comment type="similarity">
    <text evidence="5">Belongs to the SLC13A/DASS transporter (TC 2.A.47) family. NADC subfamily.</text>
</comment>
<feature type="chain" id="PRO_0000172495" description="Solute carrier family 13 member 4">
    <location>
        <begin position="1"/>
        <end position="626"/>
    </location>
</feature>
<feature type="transmembrane region" description="Helical" evidence="1">
    <location>
        <begin position="13"/>
        <end position="33"/>
    </location>
</feature>
<feature type="transmembrane region" description="Helical" evidence="1">
    <location>
        <begin position="52"/>
        <end position="72"/>
    </location>
</feature>
<feature type="transmembrane region" description="Helical" evidence="1">
    <location>
        <begin position="77"/>
        <end position="97"/>
    </location>
</feature>
<feature type="transmembrane region" description="Helical" evidence="1">
    <location>
        <begin position="113"/>
        <end position="133"/>
    </location>
</feature>
<feature type="transmembrane region" description="Helical" evidence="1">
    <location>
        <begin position="274"/>
        <end position="294"/>
    </location>
</feature>
<feature type="transmembrane region" description="Helical" evidence="1">
    <location>
        <begin position="309"/>
        <end position="329"/>
    </location>
</feature>
<feature type="transmembrane region" description="Helical" evidence="1">
    <location>
        <begin position="372"/>
        <end position="392"/>
    </location>
</feature>
<feature type="transmembrane region" description="Helical" evidence="1">
    <location>
        <begin position="414"/>
        <end position="434"/>
    </location>
</feature>
<feature type="transmembrane region" description="Helical" evidence="1">
    <location>
        <begin position="466"/>
        <end position="486"/>
    </location>
</feature>
<feature type="transmembrane region" description="Helical" evidence="1">
    <location>
        <begin position="499"/>
        <end position="519"/>
    </location>
</feature>
<feature type="transmembrane region" description="Helical" evidence="1">
    <location>
        <begin position="543"/>
        <end position="563"/>
    </location>
</feature>
<feature type="transmembrane region" description="Helical" evidence="1">
    <location>
        <begin position="590"/>
        <end position="610"/>
    </location>
</feature>
<feature type="region of interest" description="Disordered" evidence="2">
    <location>
        <begin position="217"/>
        <end position="252"/>
    </location>
</feature>
<feature type="compositionally biased region" description="Polar residues" evidence="2">
    <location>
        <begin position="217"/>
        <end position="228"/>
    </location>
</feature>
<feature type="sequence variant" id="VAR_057193" description="In dbSNP:rs36004833.">
    <original>P</original>
    <variation>S</variation>
    <location>
        <position position="451"/>
    </location>
</feature>
<feature type="sequence conflict" description="In Ref. 1; AAF05907." evidence="5" ref="1">
    <original>E</original>
    <variation>DR</variation>
    <location>
        <position position="198"/>
    </location>
</feature>
<feature type="sequence conflict" description="In Ref. 5; AAH30689." evidence="5" ref="5">
    <original>P</original>
    <variation>R</variation>
    <location>
        <position position="245"/>
    </location>
</feature>
<feature type="sequence conflict" description="In Ref. 1; AAF05907." evidence="5" ref="1">
    <original>L</original>
    <variation>M</variation>
    <location>
        <position position="539"/>
    </location>
</feature>
<name>S13A4_HUMAN</name>
<sequence>MGLLQGLLRVRKLLLVVCVPLLLLPLPVLHPSSEASCAYVLIVTAVYWVSEAVPLGAAALVPAFLYPFFGVLRSNEVAAEYFKNTTLLLVGVICVAAAVEKWNLHKRIALRMVLMAGAKPGMLLLCFMCCTTLLSMWLSNTSTTAMVMPIVEAVLQELVSAEDEQLVAGNSNTEEAEPISLDVKNSQPSLELIFVNEESNADLTTLMHNENLNGVPSITNPIKTANQHQGKKQHPSQEKPQVLTPSPRKQKLNRKYRSHHDQMICKCLSLSISYSATIGGLTTIIGTSTSLIFLEHFNNQYPAAEVVNFGTWFLFSFPISLIMLVVSWFWMHWLFLGCNFKETCSLSKKKKTKREQLSEKRIQEEYEKLGDISYPEMVTGFFFILMTVLWFTREPGFVPGWDSFFEKKGYRTDATVSVFLGFLLFLIPAKKPCFGKKNDGENQEHSLGTEPIITWKDFQKTMPWEIVILVGGGYALASGSKSSGLSTWIGNQMLSLSSLPPWAVTLLACILVSIVTEFVSNPATITIFLPILCSLSETLHINPLYTLIPVTMCISFAVMLPVGNPPNAIVFSYGHCQIKDMVKAGLGVNVIGLVIVMVAINTWGVSLFHLDTYPAWARVSNITDQA</sequence>